<gene>
    <name evidence="1" type="primary">xseA</name>
    <name type="ordered locus">BT9727_3922</name>
</gene>
<keyword id="KW-0963">Cytoplasm</keyword>
<keyword id="KW-0269">Exonuclease</keyword>
<keyword id="KW-0378">Hydrolase</keyword>
<keyword id="KW-0540">Nuclease</keyword>
<name>EX7L_BACHK</name>
<dbReference type="EC" id="3.1.11.6" evidence="1"/>
<dbReference type="EMBL" id="AE017355">
    <property type="protein sequence ID" value="AAT63127.1"/>
    <property type="molecule type" value="Genomic_DNA"/>
</dbReference>
<dbReference type="RefSeq" id="WP_000415260.1">
    <property type="nucleotide sequence ID" value="NC_005957.1"/>
</dbReference>
<dbReference type="RefSeq" id="YP_038241.1">
    <property type="nucleotide sequence ID" value="NC_005957.1"/>
</dbReference>
<dbReference type="SMR" id="Q6HDY5"/>
<dbReference type="KEGG" id="btk:BT9727_3922"/>
<dbReference type="PATRIC" id="fig|281309.8.peg.4185"/>
<dbReference type="HOGENOM" id="CLU_023625_3_1_9"/>
<dbReference type="Proteomes" id="UP000001301">
    <property type="component" value="Chromosome"/>
</dbReference>
<dbReference type="GO" id="GO:0005737">
    <property type="term" value="C:cytoplasm"/>
    <property type="evidence" value="ECO:0007669"/>
    <property type="project" value="UniProtKB-SubCell"/>
</dbReference>
<dbReference type="GO" id="GO:0009318">
    <property type="term" value="C:exodeoxyribonuclease VII complex"/>
    <property type="evidence" value="ECO:0007669"/>
    <property type="project" value="InterPro"/>
</dbReference>
<dbReference type="GO" id="GO:0008855">
    <property type="term" value="F:exodeoxyribonuclease VII activity"/>
    <property type="evidence" value="ECO:0007669"/>
    <property type="project" value="UniProtKB-UniRule"/>
</dbReference>
<dbReference type="GO" id="GO:0003676">
    <property type="term" value="F:nucleic acid binding"/>
    <property type="evidence" value="ECO:0007669"/>
    <property type="project" value="InterPro"/>
</dbReference>
<dbReference type="GO" id="GO:0006308">
    <property type="term" value="P:DNA catabolic process"/>
    <property type="evidence" value="ECO:0007669"/>
    <property type="project" value="UniProtKB-UniRule"/>
</dbReference>
<dbReference type="CDD" id="cd04489">
    <property type="entry name" value="ExoVII_LU_OBF"/>
    <property type="match status" value="1"/>
</dbReference>
<dbReference type="HAMAP" id="MF_00378">
    <property type="entry name" value="Exonuc_7_L"/>
    <property type="match status" value="1"/>
</dbReference>
<dbReference type="InterPro" id="IPR003753">
    <property type="entry name" value="Exonuc_VII_L"/>
</dbReference>
<dbReference type="InterPro" id="IPR020579">
    <property type="entry name" value="Exonuc_VII_lsu_C"/>
</dbReference>
<dbReference type="InterPro" id="IPR025824">
    <property type="entry name" value="OB-fold_nuc-bd_dom"/>
</dbReference>
<dbReference type="NCBIfam" id="TIGR00237">
    <property type="entry name" value="xseA"/>
    <property type="match status" value="1"/>
</dbReference>
<dbReference type="PANTHER" id="PTHR30008">
    <property type="entry name" value="EXODEOXYRIBONUCLEASE 7 LARGE SUBUNIT"/>
    <property type="match status" value="1"/>
</dbReference>
<dbReference type="PANTHER" id="PTHR30008:SF0">
    <property type="entry name" value="EXODEOXYRIBONUCLEASE 7 LARGE SUBUNIT"/>
    <property type="match status" value="1"/>
</dbReference>
<dbReference type="Pfam" id="PF02601">
    <property type="entry name" value="Exonuc_VII_L"/>
    <property type="match status" value="1"/>
</dbReference>
<dbReference type="Pfam" id="PF13742">
    <property type="entry name" value="tRNA_anti_2"/>
    <property type="match status" value="1"/>
</dbReference>
<reference key="1">
    <citation type="journal article" date="2006" name="J. Bacteriol.">
        <title>Pathogenomic sequence analysis of Bacillus cereus and Bacillus thuringiensis isolates closely related to Bacillus anthracis.</title>
        <authorList>
            <person name="Han C.S."/>
            <person name="Xie G."/>
            <person name="Challacombe J.F."/>
            <person name="Altherr M.R."/>
            <person name="Bhotika S.S."/>
            <person name="Bruce D."/>
            <person name="Campbell C.S."/>
            <person name="Campbell M.L."/>
            <person name="Chen J."/>
            <person name="Chertkov O."/>
            <person name="Cleland C."/>
            <person name="Dimitrijevic M."/>
            <person name="Doggett N.A."/>
            <person name="Fawcett J.J."/>
            <person name="Glavina T."/>
            <person name="Goodwin L.A."/>
            <person name="Hill K.K."/>
            <person name="Hitchcock P."/>
            <person name="Jackson P.J."/>
            <person name="Keim P."/>
            <person name="Kewalramani A.R."/>
            <person name="Longmire J."/>
            <person name="Lucas S."/>
            <person name="Malfatti S."/>
            <person name="McMurry K."/>
            <person name="Meincke L.J."/>
            <person name="Misra M."/>
            <person name="Moseman B.L."/>
            <person name="Mundt M."/>
            <person name="Munk A.C."/>
            <person name="Okinaka R.T."/>
            <person name="Parson-Quintana B."/>
            <person name="Reilly L.P."/>
            <person name="Richardson P."/>
            <person name="Robinson D.L."/>
            <person name="Rubin E."/>
            <person name="Saunders E."/>
            <person name="Tapia R."/>
            <person name="Tesmer J.G."/>
            <person name="Thayer N."/>
            <person name="Thompson L.S."/>
            <person name="Tice H."/>
            <person name="Ticknor L.O."/>
            <person name="Wills P.L."/>
            <person name="Brettin T.S."/>
            <person name="Gilna P."/>
        </authorList>
    </citation>
    <scope>NUCLEOTIDE SEQUENCE [LARGE SCALE GENOMIC DNA]</scope>
    <source>
        <strain>97-27</strain>
    </source>
</reference>
<accession>Q6HDY5</accession>
<comment type="function">
    <text evidence="1">Bidirectionally degrades single-stranded DNA into large acid-insoluble oligonucleotides, which are then degraded further into small acid-soluble oligonucleotides.</text>
</comment>
<comment type="catalytic activity">
    <reaction evidence="1">
        <text>Exonucleolytic cleavage in either 5'- to 3'- or 3'- to 5'-direction to yield nucleoside 5'-phosphates.</text>
        <dbReference type="EC" id="3.1.11.6"/>
    </reaction>
</comment>
<comment type="subunit">
    <text evidence="1">Heterooligomer composed of large and small subunits.</text>
</comment>
<comment type="subcellular location">
    <subcellularLocation>
        <location evidence="1">Cytoplasm</location>
    </subcellularLocation>
</comment>
<comment type="similarity">
    <text evidence="1">Belongs to the XseA family.</text>
</comment>
<organism>
    <name type="scientific">Bacillus thuringiensis subsp. konkukian (strain 97-27)</name>
    <dbReference type="NCBI Taxonomy" id="281309"/>
    <lineage>
        <taxon>Bacteria</taxon>
        <taxon>Bacillati</taxon>
        <taxon>Bacillota</taxon>
        <taxon>Bacilli</taxon>
        <taxon>Bacillales</taxon>
        <taxon>Bacillaceae</taxon>
        <taxon>Bacillus</taxon>
        <taxon>Bacillus cereus group</taxon>
    </lineage>
</organism>
<proteinExistence type="inferred from homology"/>
<feature type="chain" id="PRO_0000273644" description="Exodeoxyribonuclease 7 large subunit">
    <location>
        <begin position="1"/>
        <end position="452"/>
    </location>
</feature>
<evidence type="ECO:0000255" key="1">
    <source>
        <dbReference type="HAMAP-Rule" id="MF_00378"/>
    </source>
</evidence>
<sequence length="452" mass="51455">MEKQYLTVTALTRYIKTKIEYDPHLQSVWLKGEISNFKNHSRGHMYFTLKDENARIAAVMFAGHNRNIKFRPENGMKVLVKGKISVYEASGSYQIYIQDMQPDGIGNLHLAYEQLKVRLEEEGLFSQVYKKTIPPYAKTIGVITSPTGAAIRDIITTIKRRYPIGNVIVFPVLVQGESAAPSIVQAIRTANEMEEIDVLIVGRGGGSIEELWAFNEEMVARAIFKSEIPIISAVGHETDFTIADFVADLRAPTPTAAAELAAPNIIELQEKVLQRTLRLQRAMRELVHKKEEKLQVLQKSYAFRYPRQVYEQKEEQLDRALEQLVLAKERYIDKKVNQLKQLSFYLEKHHPSQKIMQTKVAVETLQKQLQREMQTLLQTKEFAFVRAAQKLEALSPLKVMMRGYGLVYDEEKQVLKSVKDVSLGDAVSVQLQDGILDCSVSGIEERELNNGK</sequence>
<protein>
    <recommendedName>
        <fullName evidence="1">Exodeoxyribonuclease 7 large subunit</fullName>
        <ecNumber evidence="1">3.1.11.6</ecNumber>
    </recommendedName>
    <alternativeName>
        <fullName evidence="1">Exodeoxyribonuclease VII large subunit</fullName>
        <shortName evidence="1">Exonuclease VII large subunit</shortName>
    </alternativeName>
</protein>